<feature type="chain" id="PRO_0000089833" description="Uncharacterized protein C11orf16 homolog">
    <location>
        <begin position="1"/>
        <end position="402"/>
    </location>
</feature>
<feature type="region of interest" description="Disordered" evidence="1">
    <location>
        <begin position="332"/>
        <end position="402"/>
    </location>
</feature>
<feature type="compositionally biased region" description="Polar residues" evidence="1">
    <location>
        <begin position="370"/>
        <end position="379"/>
    </location>
</feature>
<feature type="compositionally biased region" description="Pro residues" evidence="1">
    <location>
        <begin position="393"/>
        <end position="402"/>
    </location>
</feature>
<accession>Q9JJR6</accession>
<accession>Q80XE7</accession>
<organism>
    <name type="scientific">Mus musculus</name>
    <name type="common">Mouse</name>
    <dbReference type="NCBI Taxonomy" id="10090"/>
    <lineage>
        <taxon>Eukaryota</taxon>
        <taxon>Metazoa</taxon>
        <taxon>Chordata</taxon>
        <taxon>Craniata</taxon>
        <taxon>Vertebrata</taxon>
        <taxon>Euteleostomi</taxon>
        <taxon>Mammalia</taxon>
        <taxon>Eutheria</taxon>
        <taxon>Euarchontoglires</taxon>
        <taxon>Glires</taxon>
        <taxon>Rodentia</taxon>
        <taxon>Myomorpha</taxon>
        <taxon>Muroidea</taxon>
        <taxon>Muridae</taxon>
        <taxon>Murinae</taxon>
        <taxon>Mus</taxon>
        <taxon>Mus</taxon>
    </lineage>
</organism>
<comment type="sequence caution" evidence="2">
    <conflict type="erroneous gene model prediction">
        <sequence resource="EMBL-CDS" id="CAB92297"/>
    </conflict>
</comment>
<gene>
    <name type="primary">D7h11orf16</name>
</gene>
<name>CK016_MOUSE</name>
<keyword id="KW-1185">Reference proteome</keyword>
<protein>
    <recommendedName>
        <fullName>Uncharacterized protein C11orf16 homolog</fullName>
    </recommendedName>
</protein>
<proteinExistence type="evidence at transcript level"/>
<sequence length="402" mass="44484">MQPSASPGLPLPKYCSVATTVKAPDLHGAVPPWDMSFTCPFATQAPWLATHCTFTRCTACCPCLHTVDRPWPGLRWLGRVGAAGGSWVLARKEPDGFYYLAQIKAAPELEKRGALVVEFEAPLVTGLELPAQQQRVVFPEDVIQFSPSVPHSLQLGDKVLAPWEPGQQRYGPGTVLVGLKKQKGQRASKEKEITVHFWNGKTTKVPLGSVRWVPPTVWKKAVERLQAPHTRDCHSSCLWVPHCSQLGPRAGCTTHRHPLDSSFLCPPCLSCACCQLQCQSSCPLVGPSWWPLTRTSELTTRKLPEPEVKPTAQLLPLQGPKEEPVAELSYNMFSSSSSSSEEENSESHLEMGLPLRQMVSRAVNTDPILSETTSLQQYSPHKPEWRYWRRNGPEPPPGKPGR</sequence>
<dbReference type="EMBL" id="AJ400878">
    <property type="protein sequence ID" value="CAB92297.1"/>
    <property type="status" value="ALT_SEQ"/>
    <property type="molecule type" value="Genomic_DNA"/>
</dbReference>
<dbReference type="EMBL" id="BC051019">
    <property type="protein sequence ID" value="AAH51019.1"/>
    <property type="molecule type" value="mRNA"/>
</dbReference>
<dbReference type="CCDS" id="CCDS40084.1"/>
<dbReference type="RefSeq" id="NP_001035790.1">
    <property type="nucleotide sequence ID" value="NM_001040700.2"/>
</dbReference>
<dbReference type="RefSeq" id="XP_006508115.1">
    <property type="nucleotide sequence ID" value="XM_006508052.3"/>
</dbReference>
<dbReference type="FunCoup" id="Q9JJR6">
    <property type="interactions" value="13"/>
</dbReference>
<dbReference type="iPTMnet" id="Q9JJR6"/>
<dbReference type="PhosphoSitePlus" id="Q9JJR6"/>
<dbReference type="PaxDb" id="10090-ENSMUSP00000102346"/>
<dbReference type="ProteomicsDB" id="281683"/>
<dbReference type="Antibodypedia" id="55579">
    <property type="antibodies" value="51 antibodies from 11 providers"/>
</dbReference>
<dbReference type="DNASU" id="57355"/>
<dbReference type="Ensembl" id="ENSMUST00000033334.5">
    <property type="protein sequence ID" value="ENSMUSP00000033334.5"/>
    <property type="gene ID" value="ENSMUSG00000031022.16"/>
</dbReference>
<dbReference type="Ensembl" id="ENSMUST00000106735.9">
    <property type="protein sequence ID" value="ENSMUSP00000102346.3"/>
    <property type="gene ID" value="ENSMUSG00000031022.16"/>
</dbReference>
<dbReference type="GeneID" id="57355"/>
<dbReference type="KEGG" id="mmu:57355"/>
<dbReference type="UCSC" id="uc009jdz.1">
    <property type="organism name" value="mouse"/>
</dbReference>
<dbReference type="AGR" id="MGI:1928824"/>
<dbReference type="MGI" id="MGI:1928824">
    <property type="gene designation" value="BC051019"/>
</dbReference>
<dbReference type="VEuPathDB" id="HostDB:ENSMUSG00000031022"/>
<dbReference type="eggNOG" id="ENOG502RXS8">
    <property type="taxonomic scope" value="Eukaryota"/>
</dbReference>
<dbReference type="GeneTree" id="ENSGT00390000012348"/>
<dbReference type="HOGENOM" id="CLU_056300_0_0_1"/>
<dbReference type="InParanoid" id="Q9JJR6"/>
<dbReference type="OMA" id="DHAVNTD"/>
<dbReference type="OrthoDB" id="6241467at2759"/>
<dbReference type="PhylomeDB" id="Q9JJR6"/>
<dbReference type="TreeFam" id="TF336135"/>
<dbReference type="BioGRID-ORCS" id="57355">
    <property type="hits" value="3 hits in 77 CRISPR screens"/>
</dbReference>
<dbReference type="ChiTaRS" id="BC051019">
    <property type="organism name" value="mouse"/>
</dbReference>
<dbReference type="PRO" id="PR:Q9JJR6"/>
<dbReference type="Proteomes" id="UP000000589">
    <property type="component" value="Chromosome 7"/>
</dbReference>
<dbReference type="RNAct" id="Q9JJR6">
    <property type="molecule type" value="protein"/>
</dbReference>
<dbReference type="Bgee" id="ENSMUSG00000031022">
    <property type="expression patterns" value="Expressed in animal zygote and 25 other cell types or tissues"/>
</dbReference>
<dbReference type="ExpressionAtlas" id="Q9JJR6">
    <property type="expression patterns" value="baseline and differential"/>
</dbReference>
<dbReference type="InterPro" id="IPR032770">
    <property type="entry name" value="DUF4537"/>
</dbReference>
<dbReference type="PANTHER" id="PTHR14343:SF3">
    <property type="entry name" value="SIMILAR TO PREDICTED GENE ICRFP703B1614Q5.5"/>
    <property type="match status" value="1"/>
</dbReference>
<dbReference type="PANTHER" id="PTHR14343">
    <property type="entry name" value="VWFA DOMAIN-CONTAINING PROTEIN"/>
    <property type="match status" value="1"/>
</dbReference>
<dbReference type="Pfam" id="PF15057">
    <property type="entry name" value="DUF4537"/>
    <property type="match status" value="1"/>
</dbReference>
<reference key="1">
    <citation type="journal article" date="2001" name="Cytogenet. Cell Genet.">
        <title>Comparative genomic sequencing reveals a strikingly similar architecture of a conserved syntenic region on human chromosome 11p15.3 (including gene ST5) and mouse chromosome 7.</title>
        <authorList>
            <person name="Amid C."/>
            <person name="Bahr A."/>
            <person name="Mujica A."/>
            <person name="Sampson N."/>
            <person name="Bikar S.E."/>
            <person name="Winterpacht A."/>
            <person name="Zabel B."/>
            <person name="Hankeln T."/>
            <person name="Schmidt E.R."/>
        </authorList>
    </citation>
    <scope>NUCLEOTIDE SEQUENCE [GENOMIC DNA]</scope>
</reference>
<reference key="2">
    <citation type="journal article" date="2004" name="Genome Res.">
        <title>The status, quality, and expansion of the NIH full-length cDNA project: the Mammalian Gene Collection (MGC).</title>
        <authorList>
            <consortium name="The MGC Project Team"/>
        </authorList>
    </citation>
    <scope>NUCLEOTIDE SEQUENCE [LARGE SCALE MRNA]</scope>
    <source>
        <tissue>Olfactory epithelium</tissue>
    </source>
</reference>
<evidence type="ECO:0000256" key="1">
    <source>
        <dbReference type="SAM" id="MobiDB-lite"/>
    </source>
</evidence>
<evidence type="ECO:0000305" key="2"/>